<proteinExistence type="inferred from homology"/>
<feature type="signal peptide" evidence="1">
    <location>
        <begin position="1"/>
        <end position="28"/>
    </location>
</feature>
<feature type="chain" id="PRO_0000024003" description="Acid phosphatase">
    <location>
        <begin position="29"/>
        <end position="264"/>
    </location>
</feature>
<feature type="sequence conflict" description="In Ref. 1; AAA27700." evidence="2" ref="1">
    <original>I</original>
    <variation>V</variation>
    <location>
        <position position="17"/>
    </location>
</feature>
<reference key="1">
    <citation type="journal article" date="1989" name="J. Bacteriol.">
        <title>Cloning, sequencing, and characterization of the principal acid phosphatase, the phoC+ product, from Zymomonas mobilis.</title>
        <authorList>
            <person name="Pond J.L."/>
            <person name="Eddy C.K."/>
            <person name="MacKenzie K.F."/>
            <person name="Conway T."/>
            <person name="Borecky D.J."/>
            <person name="Ingram L.O."/>
        </authorList>
    </citation>
    <scope>NUCLEOTIDE SEQUENCE [GENOMIC DNA]</scope>
    <source>
        <strain>ATCC 31821 / ZM4 / CP4</strain>
    </source>
</reference>
<reference key="2">
    <citation type="journal article" date="2005" name="Nat. Biotechnol.">
        <title>The genome sequence of the ethanologenic bacterium Zymomonas mobilis ZM4.</title>
        <authorList>
            <person name="Seo J.-S."/>
            <person name="Chong H."/>
            <person name="Park H.S."/>
            <person name="Yoon K.-O."/>
            <person name="Jung C."/>
            <person name="Kim J.J."/>
            <person name="Hong J.H."/>
            <person name="Kim H."/>
            <person name="Kim J.-H."/>
            <person name="Kil J.-I."/>
            <person name="Park C.J."/>
            <person name="Oh H.-M."/>
            <person name="Lee J.-S."/>
            <person name="Jin S.-J."/>
            <person name="Um H.-W."/>
            <person name="Lee H.-J."/>
            <person name="Oh S.-J."/>
            <person name="Kim J.Y."/>
            <person name="Kang H.L."/>
            <person name="Lee S.Y."/>
            <person name="Lee K.J."/>
            <person name="Kang H.S."/>
        </authorList>
    </citation>
    <scope>NUCLEOTIDE SEQUENCE [LARGE SCALE GENOMIC DNA]</scope>
    <source>
        <strain>ATCC 31821 / ZM4 / CP4</strain>
    </source>
</reference>
<gene>
    <name type="primary">phoC</name>
    <name type="ordered locus">ZMO0130</name>
</gene>
<organism>
    <name type="scientific">Zymomonas mobilis subsp. mobilis (strain ATCC 31821 / ZM4 / CP4)</name>
    <dbReference type="NCBI Taxonomy" id="264203"/>
    <lineage>
        <taxon>Bacteria</taxon>
        <taxon>Pseudomonadati</taxon>
        <taxon>Pseudomonadota</taxon>
        <taxon>Alphaproteobacteria</taxon>
        <taxon>Sphingomonadales</taxon>
        <taxon>Zymomonadaceae</taxon>
        <taxon>Zymomonas</taxon>
    </lineage>
</organism>
<sequence length="264" mass="29004">MIKVPRFICMIALTSGILASGLSQSVSAHTEKSEPSSTYHFHSDPLLYLAPPPTSGSPLQAHDDQTFNSTRQLKGSTRWALATQDADLHLASVLKDYACAAGMNLDIAQLPHLANLIKRALRTEYDDIGRAKNNWNRKRPFVDTDQPICTEKDREGLGKQGSYPSGHTTIGWSVALILAELIPDHAANILQRGQIFGTSRIVCGAHWFSDVQAGYIMASGEIAALHGDADFRRDMELARKELEKARTSAHTPDDLLCKIEQSAR</sequence>
<dbReference type="EC" id="3.1.3.2"/>
<dbReference type="EMBL" id="M24141">
    <property type="protein sequence ID" value="AAA27700.1"/>
    <property type="molecule type" value="Genomic_DNA"/>
</dbReference>
<dbReference type="EMBL" id="AE008692">
    <property type="protein sequence ID" value="AAV88754.1"/>
    <property type="molecule type" value="Genomic_DNA"/>
</dbReference>
<dbReference type="PIR" id="A32044">
    <property type="entry name" value="A32044"/>
</dbReference>
<dbReference type="RefSeq" id="WP_011240095.1">
    <property type="nucleotide sequence ID" value="NZ_CP035711.1"/>
</dbReference>
<dbReference type="SMR" id="P14924"/>
<dbReference type="STRING" id="264203.ZMO0130"/>
<dbReference type="GeneID" id="79904625"/>
<dbReference type="KEGG" id="zmo:ZMO0130"/>
<dbReference type="eggNOG" id="COG0671">
    <property type="taxonomic scope" value="Bacteria"/>
</dbReference>
<dbReference type="HOGENOM" id="CLU_079861_1_0_5"/>
<dbReference type="Proteomes" id="UP000001173">
    <property type="component" value="Chromosome"/>
</dbReference>
<dbReference type="GO" id="GO:0030288">
    <property type="term" value="C:outer membrane-bounded periplasmic space"/>
    <property type="evidence" value="ECO:0007669"/>
    <property type="project" value="InterPro"/>
</dbReference>
<dbReference type="GO" id="GO:0003993">
    <property type="term" value="F:acid phosphatase activity"/>
    <property type="evidence" value="ECO:0007669"/>
    <property type="project" value="UniProtKB-EC"/>
</dbReference>
<dbReference type="CDD" id="cd03397">
    <property type="entry name" value="PAP2_acid_phosphatase"/>
    <property type="match status" value="1"/>
</dbReference>
<dbReference type="Gene3D" id="1.20.144.10">
    <property type="entry name" value="Phosphatidic acid phosphatase type 2/haloperoxidase"/>
    <property type="match status" value="1"/>
</dbReference>
<dbReference type="InterPro" id="IPR001011">
    <property type="entry name" value="Acid_Pase_classA_bac"/>
</dbReference>
<dbReference type="InterPro" id="IPR018296">
    <property type="entry name" value="Acid_Pase_classA_bac_CS"/>
</dbReference>
<dbReference type="InterPro" id="IPR036938">
    <property type="entry name" value="P_Acid_Pase_2/haloperoxi_sf"/>
</dbReference>
<dbReference type="InterPro" id="IPR000326">
    <property type="entry name" value="P_Acid_Pase_2/haloperoxidase"/>
</dbReference>
<dbReference type="Pfam" id="PF01569">
    <property type="entry name" value="PAP2"/>
    <property type="match status" value="1"/>
</dbReference>
<dbReference type="PIRSF" id="PIRSF000897">
    <property type="entry name" value="Acid_Ptase_ClsA"/>
    <property type="match status" value="1"/>
</dbReference>
<dbReference type="PRINTS" id="PR00483">
    <property type="entry name" value="BACPHPHTASE"/>
</dbReference>
<dbReference type="SMART" id="SM00014">
    <property type="entry name" value="acidPPc"/>
    <property type="match status" value="1"/>
</dbReference>
<dbReference type="SUPFAM" id="SSF48317">
    <property type="entry name" value="Acid phosphatase/Vanadium-dependent haloperoxidase"/>
    <property type="match status" value="1"/>
</dbReference>
<dbReference type="PROSITE" id="PS01157">
    <property type="entry name" value="ACID_PHOSPH_CL_A"/>
    <property type="match status" value="1"/>
</dbReference>
<comment type="catalytic activity">
    <reaction>
        <text>a phosphate monoester + H2O = an alcohol + phosphate</text>
        <dbReference type="Rhea" id="RHEA:15017"/>
        <dbReference type="ChEBI" id="CHEBI:15377"/>
        <dbReference type="ChEBI" id="CHEBI:30879"/>
        <dbReference type="ChEBI" id="CHEBI:43474"/>
        <dbReference type="ChEBI" id="CHEBI:67140"/>
        <dbReference type="EC" id="3.1.3.2"/>
    </reaction>
</comment>
<comment type="cofactor">
    <cofactor>
        <name>Mg(2+)</name>
        <dbReference type="ChEBI" id="CHEBI:18420"/>
    </cofactor>
    <cofactor>
        <name>Zn(2+)</name>
        <dbReference type="ChEBI" id="CHEBI:29105"/>
    </cofactor>
    <text>Most active with magnesium.</text>
</comment>
<comment type="subcellular location">
    <subcellularLocation>
        <location>Periplasm</location>
    </subcellularLocation>
</comment>
<comment type="similarity">
    <text evidence="2">Belongs to the class A bacterial acid phosphatase family.</text>
</comment>
<name>PPA_ZYMMO</name>
<evidence type="ECO:0000255" key="1"/>
<evidence type="ECO:0000305" key="2"/>
<keyword id="KW-0378">Hydrolase</keyword>
<keyword id="KW-0460">Magnesium</keyword>
<keyword id="KW-0574">Periplasm</keyword>
<keyword id="KW-1185">Reference proteome</keyword>
<keyword id="KW-0732">Signal</keyword>
<protein>
    <recommendedName>
        <fullName>Acid phosphatase</fullName>
        <ecNumber>3.1.3.2</ecNumber>
    </recommendedName>
</protein>
<accession>P14924</accession>
<accession>Q5NRA0</accession>